<organism>
    <name type="scientific">Drosophila melanogaster</name>
    <name type="common">Fruit fly</name>
    <dbReference type="NCBI Taxonomy" id="7227"/>
    <lineage>
        <taxon>Eukaryota</taxon>
        <taxon>Metazoa</taxon>
        <taxon>Ecdysozoa</taxon>
        <taxon>Arthropoda</taxon>
        <taxon>Hexapoda</taxon>
        <taxon>Insecta</taxon>
        <taxon>Pterygota</taxon>
        <taxon>Neoptera</taxon>
        <taxon>Endopterygota</taxon>
        <taxon>Diptera</taxon>
        <taxon>Brachycera</taxon>
        <taxon>Muscomorpha</taxon>
        <taxon>Ephydroidea</taxon>
        <taxon>Drosophilidae</taxon>
        <taxon>Drosophila</taxon>
        <taxon>Sophophora</taxon>
    </lineage>
</organism>
<gene>
    <name type="primary">Or42b</name>
    <name type="ORF">CG12754</name>
</gene>
<dbReference type="EMBL" id="AE013599">
    <property type="protein sequence ID" value="AAF57305.2"/>
    <property type="molecule type" value="Genomic_DNA"/>
</dbReference>
<dbReference type="RefSeq" id="NP_523624.2">
    <property type="nucleotide sequence ID" value="NM_078900.2"/>
</dbReference>
<dbReference type="SMR" id="Q9V9I4"/>
<dbReference type="FunCoup" id="Q9V9I4">
    <property type="interactions" value="38"/>
</dbReference>
<dbReference type="IntAct" id="Q9V9I4">
    <property type="interactions" value="1"/>
</dbReference>
<dbReference type="STRING" id="7227.FBpp0085387"/>
<dbReference type="PaxDb" id="7227-FBpp0085387"/>
<dbReference type="EnsemblMetazoa" id="FBtr0086051">
    <property type="protein sequence ID" value="FBpp0085387"/>
    <property type="gene ID" value="FBgn0033043"/>
</dbReference>
<dbReference type="GeneID" id="35516"/>
<dbReference type="KEGG" id="dme:Dmel_CG12754"/>
<dbReference type="AGR" id="FB:FBgn0033043"/>
<dbReference type="CTD" id="35516"/>
<dbReference type="FlyBase" id="FBgn0033043">
    <property type="gene designation" value="Or42b"/>
</dbReference>
<dbReference type="VEuPathDB" id="VectorBase:FBgn0033043"/>
<dbReference type="eggNOG" id="ENOG502T9HD">
    <property type="taxonomic scope" value="Eukaryota"/>
</dbReference>
<dbReference type="GeneTree" id="ENSGT00540000073151"/>
<dbReference type="HOGENOM" id="CLU_033399_8_0_1"/>
<dbReference type="InParanoid" id="Q9V9I4"/>
<dbReference type="OMA" id="HAFLIFT"/>
<dbReference type="OrthoDB" id="6604226at2759"/>
<dbReference type="PhylomeDB" id="Q9V9I4"/>
<dbReference type="BioGRID-ORCS" id="35516">
    <property type="hits" value="0 hits in 1 CRISPR screen"/>
</dbReference>
<dbReference type="GenomeRNAi" id="35516"/>
<dbReference type="PRO" id="PR:Q9V9I4"/>
<dbReference type="Proteomes" id="UP000000803">
    <property type="component" value="Chromosome 2R"/>
</dbReference>
<dbReference type="Bgee" id="FBgn0033043">
    <property type="expression patterns" value="Expressed in antennal olfactory receptor neuron of basiconic sensillum in antenna and 5 other cell types or tissues"/>
</dbReference>
<dbReference type="ExpressionAtlas" id="Q9V9I4">
    <property type="expression patterns" value="baseline and differential"/>
</dbReference>
<dbReference type="GO" id="GO:0034703">
    <property type="term" value="C:cation channel complex"/>
    <property type="evidence" value="ECO:0000250"/>
    <property type="project" value="FlyBase"/>
</dbReference>
<dbReference type="GO" id="GO:0032590">
    <property type="term" value="C:dendrite membrane"/>
    <property type="evidence" value="ECO:0000250"/>
    <property type="project" value="FlyBase"/>
</dbReference>
<dbReference type="GO" id="GO:0005886">
    <property type="term" value="C:plasma membrane"/>
    <property type="evidence" value="ECO:0000250"/>
    <property type="project" value="FlyBase"/>
</dbReference>
<dbReference type="GO" id="GO:0170020">
    <property type="term" value="F:ionotropic olfactory receptor activity"/>
    <property type="evidence" value="ECO:0000250"/>
    <property type="project" value="FlyBase"/>
</dbReference>
<dbReference type="GO" id="GO:0005549">
    <property type="term" value="F:odorant binding"/>
    <property type="evidence" value="ECO:0000250"/>
    <property type="project" value="FlyBase"/>
</dbReference>
<dbReference type="GO" id="GO:0004984">
    <property type="term" value="F:olfactory receptor activity"/>
    <property type="evidence" value="ECO:0000315"/>
    <property type="project" value="FlyBase"/>
</dbReference>
<dbReference type="GO" id="GO:0050911">
    <property type="term" value="P:detection of chemical stimulus involved in sensory perception of smell"/>
    <property type="evidence" value="ECO:0000250"/>
    <property type="project" value="FlyBase"/>
</dbReference>
<dbReference type="GO" id="GO:0007608">
    <property type="term" value="P:sensory perception of smell"/>
    <property type="evidence" value="ECO:0000315"/>
    <property type="project" value="FlyBase"/>
</dbReference>
<dbReference type="GO" id="GO:0007165">
    <property type="term" value="P:signal transduction"/>
    <property type="evidence" value="ECO:0007669"/>
    <property type="project" value="UniProtKB-KW"/>
</dbReference>
<dbReference type="InterPro" id="IPR004117">
    <property type="entry name" value="7tm6_olfct_rcpt"/>
</dbReference>
<dbReference type="PANTHER" id="PTHR21137">
    <property type="entry name" value="ODORANT RECEPTOR"/>
    <property type="match status" value="1"/>
</dbReference>
<dbReference type="PANTHER" id="PTHR21137:SF35">
    <property type="entry name" value="ODORANT RECEPTOR 19A-RELATED"/>
    <property type="match status" value="1"/>
</dbReference>
<dbReference type="Pfam" id="PF02949">
    <property type="entry name" value="7tm_6"/>
    <property type="match status" value="1"/>
</dbReference>
<comment type="function">
    <text evidence="4 5">Odorant receptor which mediates acceptance or avoidance behavior, depending on its substrates. The odorant receptor repertoire encodes a large collection of odor stimuli that vary widely in identity, intensity, and duration. May form a complex with Orco to form odorant-sensing units, providing sensitive and prolonged odorant signaling and calcium permeability. Involved in the behavioral responses to ethyl acetate and pentyl acetate.</text>
</comment>
<comment type="subunit">
    <text evidence="1">Interacts with Orco. Complexes exist early in the endomembrane system in olfactory sensory neurons (OSNs), coupling these complexes to the conserved ciliary trafficking pathway (By similarity).</text>
</comment>
<comment type="subcellular location">
    <subcellularLocation>
        <location evidence="1">Cell membrane</location>
        <topology evidence="1">Multi-pass membrane protein</topology>
    </subcellularLocation>
</comment>
<comment type="tissue specificity">
    <text evidence="3">Expressed in olfactory sensory neurons in the antenna.</text>
</comment>
<comment type="miscellaneous">
    <text>The atypical heteromeric and topological design of the odorant receptors appears to be an insect-specific solution for odor recognition, making the OR/Orco complex an attractive target for the development of highly selective insect repellents to disrupt olfactory-mediated host-seeking behaviors of insect disease vectors. Odor-evoked OR currents are independent of known G-protein-coupled second messenger pathways.</text>
</comment>
<comment type="similarity">
    <text evidence="6">Belongs to the insect chemoreceptor superfamily. Heteromeric odorant receptor channel (TC 1.A.69) family. Or2a subfamily.</text>
</comment>
<accession>Q9V9I4</accession>
<keyword id="KW-1003">Cell membrane</keyword>
<keyword id="KW-0472">Membrane</keyword>
<keyword id="KW-0552">Olfaction</keyword>
<keyword id="KW-0675">Receptor</keyword>
<keyword id="KW-1185">Reference proteome</keyword>
<keyword id="KW-0716">Sensory transduction</keyword>
<keyword id="KW-0807">Transducer</keyword>
<keyword id="KW-0812">Transmembrane</keyword>
<keyword id="KW-1133">Transmembrane helix</keyword>
<name>OR42B_DROME</name>
<evidence type="ECO:0000250" key="1"/>
<evidence type="ECO:0000255" key="2"/>
<evidence type="ECO:0000269" key="3">
    <source>
    </source>
</evidence>
<evidence type="ECO:0000269" key="4">
    <source>
    </source>
</evidence>
<evidence type="ECO:0000269" key="5">
    <source>
    </source>
</evidence>
<evidence type="ECO:0000305" key="6"/>
<reference key="1">
    <citation type="journal article" date="2000" name="Science">
        <title>The genome sequence of Drosophila melanogaster.</title>
        <authorList>
            <person name="Adams M.D."/>
            <person name="Celniker S.E."/>
            <person name="Holt R.A."/>
            <person name="Evans C.A."/>
            <person name="Gocayne J.D."/>
            <person name="Amanatides P.G."/>
            <person name="Scherer S.E."/>
            <person name="Li P.W."/>
            <person name="Hoskins R.A."/>
            <person name="Galle R.F."/>
            <person name="George R.A."/>
            <person name="Lewis S.E."/>
            <person name="Richards S."/>
            <person name="Ashburner M."/>
            <person name="Henderson S.N."/>
            <person name="Sutton G.G."/>
            <person name="Wortman J.R."/>
            <person name="Yandell M.D."/>
            <person name="Zhang Q."/>
            <person name="Chen L.X."/>
            <person name="Brandon R.C."/>
            <person name="Rogers Y.-H.C."/>
            <person name="Blazej R.G."/>
            <person name="Champe M."/>
            <person name="Pfeiffer B.D."/>
            <person name="Wan K.H."/>
            <person name="Doyle C."/>
            <person name="Baxter E.G."/>
            <person name="Helt G."/>
            <person name="Nelson C.R."/>
            <person name="Miklos G.L.G."/>
            <person name="Abril J.F."/>
            <person name="Agbayani A."/>
            <person name="An H.-J."/>
            <person name="Andrews-Pfannkoch C."/>
            <person name="Baldwin D."/>
            <person name="Ballew R.M."/>
            <person name="Basu A."/>
            <person name="Baxendale J."/>
            <person name="Bayraktaroglu L."/>
            <person name="Beasley E.M."/>
            <person name="Beeson K.Y."/>
            <person name="Benos P.V."/>
            <person name="Berman B.P."/>
            <person name="Bhandari D."/>
            <person name="Bolshakov S."/>
            <person name="Borkova D."/>
            <person name="Botchan M.R."/>
            <person name="Bouck J."/>
            <person name="Brokstein P."/>
            <person name="Brottier P."/>
            <person name="Burtis K.C."/>
            <person name="Busam D.A."/>
            <person name="Butler H."/>
            <person name="Cadieu E."/>
            <person name="Center A."/>
            <person name="Chandra I."/>
            <person name="Cherry J.M."/>
            <person name="Cawley S."/>
            <person name="Dahlke C."/>
            <person name="Davenport L.B."/>
            <person name="Davies P."/>
            <person name="de Pablos B."/>
            <person name="Delcher A."/>
            <person name="Deng Z."/>
            <person name="Mays A.D."/>
            <person name="Dew I."/>
            <person name="Dietz S.M."/>
            <person name="Dodson K."/>
            <person name="Doup L.E."/>
            <person name="Downes M."/>
            <person name="Dugan-Rocha S."/>
            <person name="Dunkov B.C."/>
            <person name="Dunn P."/>
            <person name="Durbin K.J."/>
            <person name="Evangelista C.C."/>
            <person name="Ferraz C."/>
            <person name="Ferriera S."/>
            <person name="Fleischmann W."/>
            <person name="Fosler C."/>
            <person name="Gabrielian A.E."/>
            <person name="Garg N.S."/>
            <person name="Gelbart W.M."/>
            <person name="Glasser K."/>
            <person name="Glodek A."/>
            <person name="Gong F."/>
            <person name="Gorrell J.H."/>
            <person name="Gu Z."/>
            <person name="Guan P."/>
            <person name="Harris M."/>
            <person name="Harris N.L."/>
            <person name="Harvey D.A."/>
            <person name="Heiman T.J."/>
            <person name="Hernandez J.R."/>
            <person name="Houck J."/>
            <person name="Hostin D."/>
            <person name="Houston K.A."/>
            <person name="Howland T.J."/>
            <person name="Wei M.-H."/>
            <person name="Ibegwam C."/>
            <person name="Jalali M."/>
            <person name="Kalush F."/>
            <person name="Karpen G.H."/>
            <person name="Ke Z."/>
            <person name="Kennison J.A."/>
            <person name="Ketchum K.A."/>
            <person name="Kimmel B.E."/>
            <person name="Kodira C.D."/>
            <person name="Kraft C.L."/>
            <person name="Kravitz S."/>
            <person name="Kulp D."/>
            <person name="Lai Z."/>
            <person name="Lasko P."/>
            <person name="Lei Y."/>
            <person name="Levitsky A.A."/>
            <person name="Li J.H."/>
            <person name="Li Z."/>
            <person name="Liang Y."/>
            <person name="Lin X."/>
            <person name="Liu X."/>
            <person name="Mattei B."/>
            <person name="McIntosh T.C."/>
            <person name="McLeod M.P."/>
            <person name="McPherson D."/>
            <person name="Merkulov G."/>
            <person name="Milshina N.V."/>
            <person name="Mobarry C."/>
            <person name="Morris J."/>
            <person name="Moshrefi A."/>
            <person name="Mount S.M."/>
            <person name="Moy M."/>
            <person name="Murphy B."/>
            <person name="Murphy L."/>
            <person name="Muzny D.M."/>
            <person name="Nelson D.L."/>
            <person name="Nelson D.R."/>
            <person name="Nelson K.A."/>
            <person name="Nixon K."/>
            <person name="Nusskern D.R."/>
            <person name="Pacleb J.M."/>
            <person name="Palazzolo M."/>
            <person name="Pittman G.S."/>
            <person name="Pan S."/>
            <person name="Pollard J."/>
            <person name="Puri V."/>
            <person name="Reese M.G."/>
            <person name="Reinert K."/>
            <person name="Remington K."/>
            <person name="Saunders R.D.C."/>
            <person name="Scheeler F."/>
            <person name="Shen H."/>
            <person name="Shue B.C."/>
            <person name="Siden-Kiamos I."/>
            <person name="Simpson M."/>
            <person name="Skupski M.P."/>
            <person name="Smith T.J."/>
            <person name="Spier E."/>
            <person name="Spradling A.C."/>
            <person name="Stapleton M."/>
            <person name="Strong R."/>
            <person name="Sun E."/>
            <person name="Svirskas R."/>
            <person name="Tector C."/>
            <person name="Turner R."/>
            <person name="Venter E."/>
            <person name="Wang A.H."/>
            <person name="Wang X."/>
            <person name="Wang Z.-Y."/>
            <person name="Wassarman D.A."/>
            <person name="Weinstock G.M."/>
            <person name="Weissenbach J."/>
            <person name="Williams S.M."/>
            <person name="Woodage T."/>
            <person name="Worley K.C."/>
            <person name="Wu D."/>
            <person name="Yang S."/>
            <person name="Yao Q.A."/>
            <person name="Ye J."/>
            <person name="Yeh R.-F."/>
            <person name="Zaveri J.S."/>
            <person name="Zhan M."/>
            <person name="Zhang G."/>
            <person name="Zhao Q."/>
            <person name="Zheng L."/>
            <person name="Zheng X.H."/>
            <person name="Zhong F.N."/>
            <person name="Zhong W."/>
            <person name="Zhou X."/>
            <person name="Zhu S.C."/>
            <person name="Zhu X."/>
            <person name="Smith H.O."/>
            <person name="Gibbs R.A."/>
            <person name="Myers E.W."/>
            <person name="Rubin G.M."/>
            <person name="Venter J.C."/>
        </authorList>
    </citation>
    <scope>NUCLEOTIDE SEQUENCE [LARGE SCALE GENOMIC DNA]</scope>
    <source>
        <strain>Berkeley</strain>
    </source>
</reference>
<reference key="2">
    <citation type="journal article" date="2002" name="Genome Biol.">
        <title>Annotation of the Drosophila melanogaster euchromatic genome: a systematic review.</title>
        <authorList>
            <person name="Misra S."/>
            <person name="Crosby M.A."/>
            <person name="Mungall C.J."/>
            <person name="Matthews B.B."/>
            <person name="Campbell K.S."/>
            <person name="Hradecky P."/>
            <person name="Huang Y."/>
            <person name="Kaminker J.S."/>
            <person name="Millburn G.H."/>
            <person name="Prochnik S.E."/>
            <person name="Smith C.D."/>
            <person name="Tupy J.L."/>
            <person name="Whitfield E.J."/>
            <person name="Bayraktaroglu L."/>
            <person name="Berman B.P."/>
            <person name="Bettencourt B.R."/>
            <person name="Celniker S.E."/>
            <person name="de Grey A.D.N.J."/>
            <person name="Drysdale R.A."/>
            <person name="Harris N.L."/>
            <person name="Richter J."/>
            <person name="Russo S."/>
            <person name="Schroeder A.J."/>
            <person name="Shu S.Q."/>
            <person name="Stapleton M."/>
            <person name="Yamada C."/>
            <person name="Ashburner M."/>
            <person name="Gelbart W.M."/>
            <person name="Rubin G.M."/>
            <person name="Lewis S.E."/>
        </authorList>
    </citation>
    <scope>GENOME REANNOTATION</scope>
    <source>
        <strain>Berkeley</strain>
    </source>
</reference>
<reference key="3">
    <citation type="journal article" date="2000" name="Cell">
        <title>An olfactory sensory map in the fly brain.</title>
        <authorList>
            <person name="Vosshall L.B."/>
            <person name="Wong A.M."/>
            <person name="Axel R."/>
        </authorList>
    </citation>
    <scope>TISSUE SPECIFICITY</scope>
</reference>
<reference key="4">
    <citation type="journal article" date="2011" name="J. Neurosci.">
        <title>Similar odorants elicit different behavioral and physiological responses, some supersustained.</title>
        <authorList>
            <person name="Montague S.A."/>
            <person name="Mathew D."/>
            <person name="Carlson J.R."/>
        </authorList>
    </citation>
    <scope>FUNCTION</scope>
</reference>
<reference key="5">
    <citation type="journal article" date="2011" name="PLoS ONE">
        <title>Modeling peripheral olfactory coding in Drosophila larvae.</title>
        <authorList>
            <person name="Hoare D.J."/>
            <person name="Humble J."/>
            <person name="Jin D."/>
            <person name="Gilding N."/>
            <person name="Petersen R."/>
            <person name="Cobb M."/>
            <person name="McCrohan C."/>
        </authorList>
    </citation>
    <scope>FUNCTION</scope>
</reference>
<proteinExistence type="evidence at transcript level"/>
<protein>
    <recommendedName>
        <fullName>Odorant receptor 42b</fullName>
    </recommendedName>
</protein>
<feature type="chain" id="PRO_0000174243" description="Odorant receptor 42b">
    <location>
        <begin position="1"/>
        <end position="399"/>
    </location>
</feature>
<feature type="topological domain" description="Cytoplasmic" evidence="2">
    <location>
        <begin position="1"/>
        <end position="45"/>
    </location>
</feature>
<feature type="transmembrane region" description="Helical; Name=1" evidence="2">
    <location>
        <begin position="46"/>
        <end position="66"/>
    </location>
</feature>
<feature type="topological domain" description="Extracellular" evidence="2">
    <location>
        <begin position="67"/>
        <end position="83"/>
    </location>
</feature>
<feature type="transmembrane region" description="Helical; Name=2" evidence="2">
    <location>
        <begin position="84"/>
        <end position="104"/>
    </location>
</feature>
<feature type="topological domain" description="Cytoplasmic" evidence="2">
    <location>
        <begin position="105"/>
        <end position="140"/>
    </location>
</feature>
<feature type="transmembrane region" description="Helical; Name=3" evidence="2">
    <location>
        <begin position="141"/>
        <end position="161"/>
    </location>
</feature>
<feature type="topological domain" description="Extracellular" evidence="2">
    <location>
        <begin position="162"/>
        <end position="178"/>
    </location>
</feature>
<feature type="transmembrane region" description="Helical; Name=4" evidence="2">
    <location>
        <begin position="179"/>
        <end position="199"/>
    </location>
</feature>
<feature type="topological domain" description="Cytoplasmic" evidence="2">
    <location>
        <begin position="200"/>
        <end position="268"/>
    </location>
</feature>
<feature type="transmembrane region" description="Helical; Name=5" evidence="2">
    <location>
        <begin position="269"/>
        <end position="289"/>
    </location>
</feature>
<feature type="topological domain" description="Extracellular" evidence="2">
    <location>
        <begin position="290"/>
        <end position="292"/>
    </location>
</feature>
<feature type="transmembrane region" description="Helical; Name=6" evidence="2">
    <location>
        <begin position="293"/>
        <end position="313"/>
    </location>
</feature>
<feature type="topological domain" description="Cytoplasmic" evidence="2">
    <location>
        <begin position="314"/>
        <end position="356"/>
    </location>
</feature>
<feature type="transmembrane region" description="Helical; Name=7" evidence="2">
    <location>
        <begin position="357"/>
        <end position="377"/>
    </location>
</feature>
<feature type="topological domain" description="Extracellular" evidence="2">
    <location>
        <begin position="378"/>
        <end position="399"/>
    </location>
</feature>
<sequence length="399" mass="46074">MVFELIRPAPLTEQKRSRDGCIYLYRAMKFIGWLPPKQGVLRYVYLTWTLMTFVWCTTYLPLGFLGSYMTQIKSFSPGEFLTSLQVCINAYGSSVKVAITYSMLWRLIKAKNILDQLDLRCTAMEEREKIHLVVARSNHAFLIFTFVYCGYAGSTYLSSVLSGRPPWQLYNPFIDWHDGTLKLWVASTLEYMVMSGAVLQDQLSDSYPLIYTLILRAHLDMLRERIRRLRSDENLSEAESYEELVKCVMDHKLILRYCAIIKPVIQGTIFTQFLLIGLVLGFTLINVFFFSDIWTGIASFMFVITILLQTFPFCYTCNLIMEDCESLTHAIFQSNWVDASRRYKTTLLYFLQNVQQPIVFIAGGIFQISMSSNISVAKFAFSVITITKQMNIADKFKTD</sequence>